<organism>
    <name type="scientific">Salinispora tropica (strain ATCC BAA-916 / DSM 44818 / JCM 13857 / NBRC 105044 / CNB-440)</name>
    <dbReference type="NCBI Taxonomy" id="369723"/>
    <lineage>
        <taxon>Bacteria</taxon>
        <taxon>Bacillati</taxon>
        <taxon>Actinomycetota</taxon>
        <taxon>Actinomycetes</taxon>
        <taxon>Micromonosporales</taxon>
        <taxon>Micromonosporaceae</taxon>
        <taxon>Salinispora</taxon>
    </lineage>
</organism>
<dbReference type="EMBL" id="CP000667">
    <property type="protein sequence ID" value="ABP53847.1"/>
    <property type="molecule type" value="Genomic_DNA"/>
</dbReference>
<dbReference type="RefSeq" id="WP_011905279.1">
    <property type="nucleotide sequence ID" value="NC_009380.1"/>
</dbReference>
<dbReference type="SMR" id="A4X4P7"/>
<dbReference type="STRING" id="369723.Strop_1380"/>
<dbReference type="KEGG" id="stp:Strop_1380"/>
<dbReference type="PATRIC" id="fig|369723.5.peg.1406"/>
<dbReference type="eggNOG" id="COG0184">
    <property type="taxonomic scope" value="Bacteria"/>
</dbReference>
<dbReference type="HOGENOM" id="CLU_148518_0_0_11"/>
<dbReference type="Proteomes" id="UP000000235">
    <property type="component" value="Chromosome"/>
</dbReference>
<dbReference type="GO" id="GO:0022627">
    <property type="term" value="C:cytosolic small ribosomal subunit"/>
    <property type="evidence" value="ECO:0007669"/>
    <property type="project" value="TreeGrafter"/>
</dbReference>
<dbReference type="GO" id="GO:0019843">
    <property type="term" value="F:rRNA binding"/>
    <property type="evidence" value="ECO:0007669"/>
    <property type="project" value="UniProtKB-UniRule"/>
</dbReference>
<dbReference type="GO" id="GO:0003735">
    <property type="term" value="F:structural constituent of ribosome"/>
    <property type="evidence" value="ECO:0007669"/>
    <property type="project" value="InterPro"/>
</dbReference>
<dbReference type="GO" id="GO:0006412">
    <property type="term" value="P:translation"/>
    <property type="evidence" value="ECO:0007669"/>
    <property type="project" value="UniProtKB-UniRule"/>
</dbReference>
<dbReference type="CDD" id="cd00353">
    <property type="entry name" value="Ribosomal_S15p_S13e"/>
    <property type="match status" value="1"/>
</dbReference>
<dbReference type="FunFam" id="1.10.287.10:FF:000002">
    <property type="entry name" value="30S ribosomal protein S15"/>
    <property type="match status" value="1"/>
</dbReference>
<dbReference type="Gene3D" id="6.10.250.3130">
    <property type="match status" value="1"/>
</dbReference>
<dbReference type="Gene3D" id="1.10.287.10">
    <property type="entry name" value="S15/NS1, RNA-binding"/>
    <property type="match status" value="1"/>
</dbReference>
<dbReference type="HAMAP" id="MF_01343_B">
    <property type="entry name" value="Ribosomal_uS15_B"/>
    <property type="match status" value="1"/>
</dbReference>
<dbReference type="InterPro" id="IPR000589">
    <property type="entry name" value="Ribosomal_uS15"/>
</dbReference>
<dbReference type="InterPro" id="IPR005290">
    <property type="entry name" value="Ribosomal_uS15_bac-type"/>
</dbReference>
<dbReference type="InterPro" id="IPR009068">
    <property type="entry name" value="uS15_NS1_RNA-bd_sf"/>
</dbReference>
<dbReference type="NCBIfam" id="TIGR00952">
    <property type="entry name" value="S15_bact"/>
    <property type="match status" value="1"/>
</dbReference>
<dbReference type="PANTHER" id="PTHR23321">
    <property type="entry name" value="RIBOSOMAL PROTEIN S15, BACTERIAL AND ORGANELLAR"/>
    <property type="match status" value="1"/>
</dbReference>
<dbReference type="PANTHER" id="PTHR23321:SF26">
    <property type="entry name" value="SMALL RIBOSOMAL SUBUNIT PROTEIN US15M"/>
    <property type="match status" value="1"/>
</dbReference>
<dbReference type="Pfam" id="PF00312">
    <property type="entry name" value="Ribosomal_S15"/>
    <property type="match status" value="1"/>
</dbReference>
<dbReference type="SMART" id="SM01387">
    <property type="entry name" value="Ribosomal_S15"/>
    <property type="match status" value="1"/>
</dbReference>
<dbReference type="SUPFAM" id="SSF47060">
    <property type="entry name" value="S15/NS1 RNA-binding domain"/>
    <property type="match status" value="1"/>
</dbReference>
<dbReference type="PROSITE" id="PS00362">
    <property type="entry name" value="RIBOSOMAL_S15"/>
    <property type="match status" value="1"/>
</dbReference>
<keyword id="KW-1185">Reference proteome</keyword>
<keyword id="KW-0687">Ribonucleoprotein</keyword>
<keyword id="KW-0689">Ribosomal protein</keyword>
<keyword id="KW-0694">RNA-binding</keyword>
<keyword id="KW-0699">rRNA-binding</keyword>
<accession>A4X4P7</accession>
<feature type="chain" id="PRO_1000086817" description="Small ribosomal subunit protein uS15">
    <location>
        <begin position="1"/>
        <end position="89"/>
    </location>
</feature>
<protein>
    <recommendedName>
        <fullName evidence="1">Small ribosomal subunit protein uS15</fullName>
    </recommendedName>
    <alternativeName>
        <fullName evidence="2">30S ribosomal protein S15</fullName>
    </alternativeName>
</protein>
<reference key="1">
    <citation type="journal article" date="2007" name="Proc. Natl. Acad. Sci. U.S.A.">
        <title>Genome sequencing reveals complex secondary metabolome in the marine actinomycete Salinispora tropica.</title>
        <authorList>
            <person name="Udwary D.W."/>
            <person name="Zeigler L."/>
            <person name="Asolkar R.N."/>
            <person name="Singan V."/>
            <person name="Lapidus A."/>
            <person name="Fenical W."/>
            <person name="Jensen P.R."/>
            <person name="Moore B.S."/>
        </authorList>
    </citation>
    <scope>NUCLEOTIDE SEQUENCE [LARGE SCALE GENOMIC DNA]</scope>
    <source>
        <strain>ATCC BAA-916 / DSM 44818 / JCM 13857 / NBRC 105044 / CNB-440</strain>
    </source>
</reference>
<comment type="function">
    <text evidence="1">One of the primary rRNA binding proteins, it binds directly to 16S rRNA where it helps nucleate assembly of the platform of the 30S subunit by binding and bridging several RNA helices of the 16S rRNA.</text>
</comment>
<comment type="function">
    <text evidence="1">Forms an intersubunit bridge (bridge B4) with the 23S rRNA of the 50S subunit in the ribosome.</text>
</comment>
<comment type="subunit">
    <text evidence="1">Part of the 30S ribosomal subunit. Forms a bridge to the 50S subunit in the 70S ribosome, contacting the 23S rRNA.</text>
</comment>
<comment type="similarity">
    <text evidence="1">Belongs to the universal ribosomal protein uS15 family.</text>
</comment>
<name>RS15_SALTO</name>
<proteinExistence type="inferred from homology"/>
<gene>
    <name evidence="1" type="primary">rpsO</name>
    <name type="ordered locus">Strop_1380</name>
</gene>
<evidence type="ECO:0000255" key="1">
    <source>
        <dbReference type="HAMAP-Rule" id="MF_01343"/>
    </source>
</evidence>
<evidence type="ECO:0000305" key="2"/>
<sequence length="89" mass="10377">MALDQQAKAKIRAEYATVEGDTGSPEVQVAVLTKRIADLTEHLKVHKHDHHSRRGLLLLVGRRRRLLNYVQKKDINRYRSLIERLGLRR</sequence>